<organism>
    <name type="scientific">Rhodopseudomonas palustris (strain BisA53)</name>
    <dbReference type="NCBI Taxonomy" id="316055"/>
    <lineage>
        <taxon>Bacteria</taxon>
        <taxon>Pseudomonadati</taxon>
        <taxon>Pseudomonadota</taxon>
        <taxon>Alphaproteobacteria</taxon>
        <taxon>Hyphomicrobiales</taxon>
        <taxon>Nitrobacteraceae</taxon>
        <taxon>Rhodopseudomonas</taxon>
    </lineage>
</organism>
<proteinExistence type="inferred from homology"/>
<gene>
    <name evidence="1" type="primary">miaA</name>
    <name type="ordered locus">RPE_2186</name>
</gene>
<comment type="function">
    <text evidence="1">Catalyzes the transfer of a dimethylallyl group onto the adenine at position 37 in tRNAs that read codons beginning with uridine, leading to the formation of N6-(dimethylallyl)adenosine (i(6)A).</text>
</comment>
<comment type="catalytic activity">
    <reaction evidence="1">
        <text>adenosine(37) in tRNA + dimethylallyl diphosphate = N(6)-dimethylallyladenosine(37) in tRNA + diphosphate</text>
        <dbReference type="Rhea" id="RHEA:26482"/>
        <dbReference type="Rhea" id="RHEA-COMP:10162"/>
        <dbReference type="Rhea" id="RHEA-COMP:10375"/>
        <dbReference type="ChEBI" id="CHEBI:33019"/>
        <dbReference type="ChEBI" id="CHEBI:57623"/>
        <dbReference type="ChEBI" id="CHEBI:74411"/>
        <dbReference type="ChEBI" id="CHEBI:74415"/>
        <dbReference type="EC" id="2.5.1.75"/>
    </reaction>
</comment>
<comment type="cofactor">
    <cofactor evidence="1">
        <name>Mg(2+)</name>
        <dbReference type="ChEBI" id="CHEBI:18420"/>
    </cofactor>
</comment>
<comment type="subunit">
    <text evidence="1">Monomer.</text>
</comment>
<comment type="similarity">
    <text evidence="1">Belongs to the IPP transferase family.</text>
</comment>
<dbReference type="EC" id="2.5.1.75" evidence="1"/>
<dbReference type="EMBL" id="CP000463">
    <property type="protein sequence ID" value="ABJ06130.1"/>
    <property type="molecule type" value="Genomic_DNA"/>
</dbReference>
<dbReference type="SMR" id="Q07PK4"/>
<dbReference type="STRING" id="316055.RPE_2186"/>
<dbReference type="KEGG" id="rpe:RPE_2186"/>
<dbReference type="eggNOG" id="COG0324">
    <property type="taxonomic scope" value="Bacteria"/>
</dbReference>
<dbReference type="HOGENOM" id="CLU_032616_0_1_5"/>
<dbReference type="OrthoDB" id="9776390at2"/>
<dbReference type="GO" id="GO:0005524">
    <property type="term" value="F:ATP binding"/>
    <property type="evidence" value="ECO:0007669"/>
    <property type="project" value="UniProtKB-UniRule"/>
</dbReference>
<dbReference type="GO" id="GO:0052381">
    <property type="term" value="F:tRNA dimethylallyltransferase activity"/>
    <property type="evidence" value="ECO:0007669"/>
    <property type="project" value="UniProtKB-UniRule"/>
</dbReference>
<dbReference type="GO" id="GO:0006400">
    <property type="term" value="P:tRNA modification"/>
    <property type="evidence" value="ECO:0007669"/>
    <property type="project" value="TreeGrafter"/>
</dbReference>
<dbReference type="Gene3D" id="1.10.20.140">
    <property type="match status" value="1"/>
</dbReference>
<dbReference type="Gene3D" id="3.40.50.300">
    <property type="entry name" value="P-loop containing nucleotide triphosphate hydrolases"/>
    <property type="match status" value="1"/>
</dbReference>
<dbReference type="HAMAP" id="MF_00185">
    <property type="entry name" value="IPP_trans"/>
    <property type="match status" value="1"/>
</dbReference>
<dbReference type="InterPro" id="IPR039657">
    <property type="entry name" value="Dimethylallyltransferase"/>
</dbReference>
<dbReference type="InterPro" id="IPR018022">
    <property type="entry name" value="IPT"/>
</dbReference>
<dbReference type="InterPro" id="IPR027417">
    <property type="entry name" value="P-loop_NTPase"/>
</dbReference>
<dbReference type="NCBIfam" id="TIGR00174">
    <property type="entry name" value="miaA"/>
    <property type="match status" value="1"/>
</dbReference>
<dbReference type="PANTHER" id="PTHR11088">
    <property type="entry name" value="TRNA DIMETHYLALLYLTRANSFERASE"/>
    <property type="match status" value="1"/>
</dbReference>
<dbReference type="PANTHER" id="PTHR11088:SF60">
    <property type="entry name" value="TRNA DIMETHYLALLYLTRANSFERASE"/>
    <property type="match status" value="1"/>
</dbReference>
<dbReference type="Pfam" id="PF01715">
    <property type="entry name" value="IPPT"/>
    <property type="match status" value="1"/>
</dbReference>
<dbReference type="SUPFAM" id="SSF52540">
    <property type="entry name" value="P-loop containing nucleoside triphosphate hydrolases"/>
    <property type="match status" value="2"/>
</dbReference>
<name>MIAA_RHOP5</name>
<sequence>MSVATSDMSGAGPEQAKAVLIAGPTASGKSALALRLAEARGGVVINTDSMQVYRDLRVLTARPTPDEEARAPHRLYGTVDAAQNFSAGAWLDAAAGALAEARRAGAMPIFIGGSGLYFKALTRGLSAVPPIAPEVREAVRERLARDGVAALHAELARCDSEAAARLNVADRSRVARALEVIIATGKPQAAWHAEALPPLLPPSEVLAAVFLAPQREALYARIDARFATMLAEGALDEVAALRARQLDPLLPAMKAHGVPALIRHLDGALSLDEAAAIGCADTRHYAKRQFTWFRHQLPEFCWVAPEEAGNYLGDVIPGRERSERARNP</sequence>
<protein>
    <recommendedName>
        <fullName evidence="1">tRNA dimethylallyltransferase</fullName>
        <ecNumber evidence="1">2.5.1.75</ecNumber>
    </recommendedName>
    <alternativeName>
        <fullName evidence="1">Dimethylallyl diphosphate:tRNA dimethylallyltransferase</fullName>
        <shortName evidence="1">DMAPP:tRNA dimethylallyltransferase</shortName>
        <shortName evidence="1">DMATase</shortName>
    </alternativeName>
    <alternativeName>
        <fullName evidence="1">Isopentenyl-diphosphate:tRNA isopentenyltransferase</fullName>
        <shortName evidence="1">IPP transferase</shortName>
        <shortName evidence="1">IPPT</shortName>
        <shortName evidence="1">IPTase</shortName>
    </alternativeName>
</protein>
<feature type="chain" id="PRO_0000377288" description="tRNA dimethylallyltransferase">
    <location>
        <begin position="1"/>
        <end position="328"/>
    </location>
</feature>
<feature type="region of interest" description="Interaction with substrate tRNA" evidence="1">
    <location>
        <begin position="48"/>
        <end position="51"/>
    </location>
</feature>
<feature type="binding site" evidence="1">
    <location>
        <begin position="23"/>
        <end position="30"/>
    </location>
    <ligand>
        <name>ATP</name>
        <dbReference type="ChEBI" id="CHEBI:30616"/>
    </ligand>
</feature>
<feature type="binding site" evidence="1">
    <location>
        <begin position="25"/>
        <end position="30"/>
    </location>
    <ligand>
        <name>substrate</name>
    </ligand>
</feature>
<feature type="site" description="Interaction with substrate tRNA" evidence="1">
    <location>
        <position position="114"/>
    </location>
</feature>
<feature type="site" description="Interaction with substrate tRNA" evidence="1">
    <location>
        <position position="136"/>
    </location>
</feature>
<evidence type="ECO:0000255" key="1">
    <source>
        <dbReference type="HAMAP-Rule" id="MF_00185"/>
    </source>
</evidence>
<keyword id="KW-0067">ATP-binding</keyword>
<keyword id="KW-0460">Magnesium</keyword>
<keyword id="KW-0547">Nucleotide-binding</keyword>
<keyword id="KW-0808">Transferase</keyword>
<keyword id="KW-0819">tRNA processing</keyword>
<accession>Q07PK4</accession>
<reference key="1">
    <citation type="submission" date="2006-09" db="EMBL/GenBank/DDBJ databases">
        <title>Complete sequence of Rhodopseudomonas palustris BisA53.</title>
        <authorList>
            <consortium name="US DOE Joint Genome Institute"/>
            <person name="Copeland A."/>
            <person name="Lucas S."/>
            <person name="Lapidus A."/>
            <person name="Barry K."/>
            <person name="Detter J.C."/>
            <person name="Glavina del Rio T."/>
            <person name="Hammon N."/>
            <person name="Israni S."/>
            <person name="Dalin E."/>
            <person name="Tice H."/>
            <person name="Pitluck S."/>
            <person name="Chain P."/>
            <person name="Malfatti S."/>
            <person name="Shin M."/>
            <person name="Vergez L."/>
            <person name="Schmutz J."/>
            <person name="Larimer F."/>
            <person name="Land M."/>
            <person name="Hauser L."/>
            <person name="Pelletier D.A."/>
            <person name="Kyrpides N."/>
            <person name="Kim E."/>
            <person name="Harwood C.S."/>
            <person name="Oda Y."/>
            <person name="Richardson P."/>
        </authorList>
    </citation>
    <scope>NUCLEOTIDE SEQUENCE [LARGE SCALE GENOMIC DNA]</scope>
    <source>
        <strain>BisA53</strain>
    </source>
</reference>